<dbReference type="EMBL" id="AB046002">
    <property type="protein sequence ID" value="BAB01584.1"/>
    <property type="molecule type" value="mRNA"/>
</dbReference>
<dbReference type="RefSeq" id="NP_001270953.1">
    <property type="nucleotide sequence ID" value="NM_001284024.1"/>
</dbReference>
<dbReference type="SMR" id="Q9N0C8"/>
<dbReference type="STRING" id="9541.ENSMFAP00000038474"/>
<dbReference type="eggNOG" id="ENOG502RZA6">
    <property type="taxonomic scope" value="Eukaryota"/>
</dbReference>
<dbReference type="Proteomes" id="UP000233100">
    <property type="component" value="Unplaced"/>
</dbReference>
<dbReference type="GO" id="GO:0005737">
    <property type="term" value="C:cytoplasm"/>
    <property type="evidence" value="ECO:0007669"/>
    <property type="project" value="TreeGrafter"/>
</dbReference>
<dbReference type="GO" id="GO:0019005">
    <property type="term" value="C:SCF ubiquitin ligase complex"/>
    <property type="evidence" value="ECO:0000250"/>
    <property type="project" value="UniProtKB"/>
</dbReference>
<dbReference type="GO" id="GO:0061630">
    <property type="term" value="F:ubiquitin protein ligase activity"/>
    <property type="evidence" value="ECO:0007669"/>
    <property type="project" value="TreeGrafter"/>
</dbReference>
<dbReference type="GO" id="GO:0036503">
    <property type="term" value="P:ERAD pathway"/>
    <property type="evidence" value="ECO:0007669"/>
    <property type="project" value="TreeGrafter"/>
</dbReference>
<dbReference type="GO" id="GO:0006516">
    <property type="term" value="P:glycoprotein catabolic process"/>
    <property type="evidence" value="ECO:0007669"/>
    <property type="project" value="TreeGrafter"/>
</dbReference>
<dbReference type="GO" id="GO:0031146">
    <property type="term" value="P:SCF-dependent proteasomal ubiquitin-dependent protein catabolic process"/>
    <property type="evidence" value="ECO:0007669"/>
    <property type="project" value="TreeGrafter"/>
</dbReference>
<dbReference type="FunFam" id="2.60.120.260:FF:000012">
    <property type="entry name" value="F-box only protein 2"/>
    <property type="match status" value="1"/>
</dbReference>
<dbReference type="FunFam" id="1.20.1280.50:FF:000002">
    <property type="entry name" value="F-box only protein 44"/>
    <property type="match status" value="1"/>
</dbReference>
<dbReference type="Gene3D" id="1.20.1280.50">
    <property type="match status" value="1"/>
</dbReference>
<dbReference type="Gene3D" id="2.60.120.260">
    <property type="entry name" value="Galactose-binding domain-like"/>
    <property type="match status" value="1"/>
</dbReference>
<dbReference type="InterPro" id="IPR007397">
    <property type="entry name" value="F-box-assoc_dom"/>
</dbReference>
<dbReference type="InterPro" id="IPR036047">
    <property type="entry name" value="F-box-like_dom_sf"/>
</dbReference>
<dbReference type="InterPro" id="IPR001810">
    <property type="entry name" value="F-box_dom"/>
</dbReference>
<dbReference type="InterPro" id="IPR039752">
    <property type="entry name" value="F-box_only"/>
</dbReference>
<dbReference type="InterPro" id="IPR008979">
    <property type="entry name" value="Galactose-bd-like_sf"/>
</dbReference>
<dbReference type="PANTHER" id="PTHR12125:SF9">
    <property type="entry name" value="F-BOX ONLY PROTEIN 27"/>
    <property type="match status" value="1"/>
</dbReference>
<dbReference type="PANTHER" id="PTHR12125">
    <property type="entry name" value="F-BOX ONLY PROTEIN 6-LIKE PROTEIN"/>
    <property type="match status" value="1"/>
</dbReference>
<dbReference type="Pfam" id="PF12937">
    <property type="entry name" value="F-box-like"/>
    <property type="match status" value="1"/>
</dbReference>
<dbReference type="Pfam" id="PF04300">
    <property type="entry name" value="FBA"/>
    <property type="match status" value="1"/>
</dbReference>
<dbReference type="SMART" id="SM01198">
    <property type="entry name" value="FBA"/>
    <property type="match status" value="1"/>
</dbReference>
<dbReference type="SMART" id="SM00256">
    <property type="entry name" value="FBOX"/>
    <property type="match status" value="1"/>
</dbReference>
<dbReference type="SUPFAM" id="SSF81383">
    <property type="entry name" value="F-box domain"/>
    <property type="match status" value="1"/>
</dbReference>
<dbReference type="SUPFAM" id="SSF49785">
    <property type="entry name" value="Galactose-binding domain-like"/>
    <property type="match status" value="1"/>
</dbReference>
<dbReference type="PROSITE" id="PS51114">
    <property type="entry name" value="FBA"/>
    <property type="match status" value="1"/>
</dbReference>
<dbReference type="PROSITE" id="PS50181">
    <property type="entry name" value="FBOX"/>
    <property type="match status" value="1"/>
</dbReference>
<reference key="1">
    <citation type="journal article" date="2001" name="Gene">
        <title>Assignment of 118 novel cDNAs of cynomolgus monkey brain to human chromosomes.</title>
        <authorList>
            <person name="Osada N."/>
            <person name="Hida M."/>
            <person name="Kususda J."/>
            <person name="Tanuma R."/>
            <person name="Iseki K."/>
            <person name="Hirata M."/>
            <person name="Suto Y."/>
            <person name="Hirai M."/>
            <person name="Terao K."/>
            <person name="Suzuki Y."/>
            <person name="Sugano S."/>
            <person name="Hashimoto K."/>
        </authorList>
    </citation>
    <scope>NUCLEOTIDE SEQUENCE [LARGE SCALE MRNA]</scope>
    <source>
        <tissue>Brain cortex</tissue>
    </source>
</reference>
<reference key="2">
    <citation type="journal article" date="2001" name="Gene">
        <authorList>
            <person name="Osada N."/>
            <person name="Hida M."/>
            <person name="Kusuda J."/>
            <person name="Tanuma R."/>
            <person name="Iseki K."/>
            <person name="Hirata M."/>
            <person name="Suto Y."/>
            <person name="Hirai M."/>
            <person name="Terao K."/>
            <person name="Suzuki Y."/>
            <person name="Sugano S."/>
            <person name="Hashimoto K."/>
            <person name="Kususda J."/>
        </authorList>
    </citation>
    <scope>ERRATUM OF PUBMED:11574149</scope>
</reference>
<proteinExistence type="evidence at transcript level"/>
<gene>
    <name type="primary">FBXO27</name>
    <name type="ORF">QccE-12959</name>
</gene>
<organism>
    <name type="scientific">Macaca fascicularis</name>
    <name type="common">Crab-eating macaque</name>
    <name type="synonym">Cynomolgus monkey</name>
    <dbReference type="NCBI Taxonomy" id="9541"/>
    <lineage>
        <taxon>Eukaryota</taxon>
        <taxon>Metazoa</taxon>
        <taxon>Chordata</taxon>
        <taxon>Craniata</taxon>
        <taxon>Vertebrata</taxon>
        <taxon>Euteleostomi</taxon>
        <taxon>Mammalia</taxon>
        <taxon>Eutheria</taxon>
        <taxon>Euarchontoglires</taxon>
        <taxon>Primates</taxon>
        <taxon>Haplorrhini</taxon>
        <taxon>Catarrhini</taxon>
        <taxon>Cercopithecidae</taxon>
        <taxon>Cercopithecinae</taxon>
        <taxon>Macaca</taxon>
    </lineage>
</organism>
<name>FBX27_MACFA</name>
<accession>Q9N0C8</accession>
<protein>
    <recommendedName>
        <fullName>F-box only protein 27</fullName>
    </recommendedName>
</protein>
<sequence length="280" mass="31379">MGAWASRGRAARVPAPEPESEPEEALDLSQLPPELLLVVLSHVPPRTLLGRCRQVCRGWRALVDGQALWLLILARDHSATGRALLHLARSCQSPARNARPCPLGRFCARRPIGRNPCGQGLRKWMVQHGGDGWVVEENRTTVPGAPSQTCFVTSFSWCRKKQVLDLEEEGLWPELLDSGRIEICVSDWWGARHDSGCMYRLLVQLLDANQTVLDKFSAVPDPIPQWNNNACLHVTHVFSNIKMGVRFVSFEHWGQDTQFWAGHYGARVTNSSVIVRVHLS</sequence>
<keyword id="KW-1185">Reference proteome</keyword>
<keyword id="KW-0833">Ubl conjugation pathway</keyword>
<feature type="chain" id="PRO_0000119915" description="F-box only protein 27">
    <location>
        <begin position="1"/>
        <end position="280"/>
    </location>
</feature>
<feature type="domain" description="F-box" evidence="2">
    <location>
        <begin position="25"/>
        <end position="72"/>
    </location>
</feature>
<feature type="domain" description="FBA" evidence="3">
    <location>
        <begin position="100"/>
        <end position="277"/>
    </location>
</feature>
<feature type="region of interest" description="Disordered" evidence="4">
    <location>
        <begin position="1"/>
        <end position="26"/>
    </location>
</feature>
<evidence type="ECO:0000250" key="1"/>
<evidence type="ECO:0000255" key="2">
    <source>
        <dbReference type="PROSITE-ProRule" id="PRU00080"/>
    </source>
</evidence>
<evidence type="ECO:0000255" key="3">
    <source>
        <dbReference type="PROSITE-ProRule" id="PRU00482"/>
    </source>
</evidence>
<evidence type="ECO:0000256" key="4">
    <source>
        <dbReference type="SAM" id="MobiDB-lite"/>
    </source>
</evidence>
<comment type="function">
    <text evidence="1">Substrate-recognition component of the SCF (SKP1-CUL1-F-box protein)-type E3 ubiquitin ligase complex. Able to recognize and bind complex-type oligosaccharides.</text>
</comment>
<comment type="subunit">
    <text evidence="1">Part of a SCF (SKP1-cullin-F-box) protein ligase complex. Interacts with SKP1 and CUL1 (By similarity).</text>
</comment>